<feature type="signal peptide" evidence="1">
    <location>
        <begin position="1"/>
        <end position="35"/>
    </location>
</feature>
<feature type="chain" id="PRO_0000431993" description="Sushi domain-containing protein 4">
    <location>
        <begin position="36"/>
        <end position="484"/>
    </location>
</feature>
<feature type="transmembrane region" description="Helical" evidence="1">
    <location>
        <begin position="311"/>
        <end position="331"/>
    </location>
</feature>
<feature type="domain" description="Sushi 1" evidence="2">
    <location>
        <begin position="46"/>
        <end position="110"/>
    </location>
</feature>
<feature type="domain" description="Sushi 2" evidence="2">
    <location>
        <begin position="111"/>
        <end position="168"/>
    </location>
</feature>
<feature type="domain" description="Sushi 3" evidence="2">
    <location>
        <begin position="169"/>
        <end position="230"/>
    </location>
</feature>
<feature type="domain" description="Sushi 4" evidence="2">
    <location>
        <begin position="232"/>
        <end position="295"/>
    </location>
</feature>
<feature type="region of interest" description="Disordered" evidence="3">
    <location>
        <begin position="374"/>
        <end position="484"/>
    </location>
</feature>
<feature type="compositionally biased region" description="Polar residues" evidence="3">
    <location>
        <begin position="424"/>
        <end position="442"/>
    </location>
</feature>
<feature type="compositionally biased region" description="Polar residues" evidence="3">
    <location>
        <begin position="449"/>
        <end position="467"/>
    </location>
</feature>
<feature type="compositionally biased region" description="Acidic residues" evidence="3">
    <location>
        <begin position="470"/>
        <end position="484"/>
    </location>
</feature>
<feature type="glycosylation site" description="N-linked (GlcNAc...) asparagine" evidence="1">
    <location>
        <position position="95"/>
    </location>
</feature>
<feature type="glycosylation site" description="N-linked (GlcNAc...) asparagine" evidence="1">
    <location>
        <position position="125"/>
    </location>
</feature>
<feature type="glycosylation site" description="N-linked (GlcNAc...) asparagine" evidence="1">
    <location>
        <position position="183"/>
    </location>
</feature>
<feature type="disulfide bond" evidence="2">
    <location>
        <begin position="48"/>
        <end position="90"/>
    </location>
</feature>
<feature type="disulfide bond" evidence="2">
    <location>
        <begin position="76"/>
        <end position="108"/>
    </location>
</feature>
<feature type="disulfide bond" evidence="2">
    <location>
        <begin position="113"/>
        <end position="156"/>
    </location>
</feature>
<feature type="disulfide bond" evidence="2">
    <location>
        <begin position="138"/>
        <end position="168"/>
    </location>
</feature>
<feature type="disulfide bond" evidence="2">
    <location>
        <begin position="171"/>
        <end position="215"/>
    </location>
</feature>
<feature type="disulfide bond" evidence="2">
    <location>
        <begin position="201"/>
        <end position="228"/>
    </location>
</feature>
<feature type="disulfide bond" evidence="2">
    <location>
        <begin position="234"/>
        <end position="280"/>
    </location>
</feature>
<feature type="disulfide bond" evidence="2">
    <location>
        <begin position="265"/>
        <end position="293"/>
    </location>
</feature>
<organism>
    <name type="scientific">Danio rerio</name>
    <name type="common">Zebrafish</name>
    <name type="synonym">Brachydanio rerio</name>
    <dbReference type="NCBI Taxonomy" id="7955"/>
    <lineage>
        <taxon>Eukaryota</taxon>
        <taxon>Metazoa</taxon>
        <taxon>Chordata</taxon>
        <taxon>Craniata</taxon>
        <taxon>Vertebrata</taxon>
        <taxon>Euteleostomi</taxon>
        <taxon>Actinopterygii</taxon>
        <taxon>Neopterygii</taxon>
        <taxon>Teleostei</taxon>
        <taxon>Ostariophysi</taxon>
        <taxon>Cypriniformes</taxon>
        <taxon>Danionidae</taxon>
        <taxon>Danioninae</taxon>
        <taxon>Danio</taxon>
    </lineage>
</organism>
<protein>
    <recommendedName>
        <fullName>Sushi domain-containing protein 4</fullName>
    </recommendedName>
</protein>
<evidence type="ECO:0000255" key="1"/>
<evidence type="ECO:0000255" key="2">
    <source>
        <dbReference type="PROSITE-ProRule" id="PRU00302"/>
    </source>
</evidence>
<evidence type="ECO:0000256" key="3">
    <source>
        <dbReference type="SAM" id="MobiDB-lite"/>
    </source>
</evidence>
<evidence type="ECO:0000269" key="4">
    <source>
    </source>
</evidence>
<evidence type="ECO:0000305" key="5"/>
<sequence>MFHHADKGGKKSAFGHPVCGQIILSIILLRPPLLVTAFPVNTVEEQICKDPGFPEHGIRTPSIGKFFENSVARFSCADGFSLKGPAKIICTRFYNGSLGWKPSLKPVCLSEDCLPPFIEDADVTNRTYRPGDSLIISCHEGFQIRYPDTETMESVCQADGTWDNQPTCQGCLRPLIPPHSYMNISETKFSVPVGTVVHYQCFPGYKLEGPELLECMYNLIWSDTPPRCLDVEACSLPPMIEHGDYTCHPHPCDRYIHGTVVEYYCYPGYSLANDYKYITCQYGQWFPQMQLYCVKDETTWPGFQDSLLTTWKVVACTATSVLLALLLVITAKMFHYKCKSQQSPSDEPDESRDPNILVVDGVAVPLPSYEEAISGNYCQPPNDLPPDGLESAQHSEEQNPPSYPGHTGSQNSVPLDTGDVENCDSLSDTSECLQGLQPSSSHPGGLNMSEKTNAITSMEETASTSPSIDIADEIPLVEDGEEDC</sequence>
<accession>E7FEC4</accession>
<comment type="subcellular location">
    <subcellularLocation>
        <location evidence="5">Membrane</location>
        <topology evidence="5">Single-pass type I membrane protein</topology>
    </subcellularLocation>
</comment>
<comment type="disruption phenotype">
    <text evidence="4">Morpholino knockdown of the protein causes defects in development, abnormal locomotion and increased mortality. At 3 days postfertilization morphants have abnormally (delayed) developed eyes.</text>
</comment>
<reference key="1">
    <citation type="journal article" date="2013" name="Nature">
        <title>The zebrafish reference genome sequence and its relationship to the human genome.</title>
        <authorList>
            <person name="Howe K."/>
            <person name="Clark M.D."/>
            <person name="Torroja C.F."/>
            <person name="Torrance J."/>
            <person name="Berthelot C."/>
            <person name="Muffato M."/>
            <person name="Collins J.E."/>
            <person name="Humphray S."/>
            <person name="McLaren K."/>
            <person name="Matthews L."/>
            <person name="McLaren S."/>
            <person name="Sealy I."/>
            <person name="Caccamo M."/>
            <person name="Churcher C."/>
            <person name="Scott C."/>
            <person name="Barrett J.C."/>
            <person name="Koch R."/>
            <person name="Rauch G.J."/>
            <person name="White S."/>
            <person name="Chow W."/>
            <person name="Kilian B."/>
            <person name="Quintais L.T."/>
            <person name="Guerra-Assuncao J.A."/>
            <person name="Zhou Y."/>
            <person name="Gu Y."/>
            <person name="Yen J."/>
            <person name="Vogel J.H."/>
            <person name="Eyre T."/>
            <person name="Redmond S."/>
            <person name="Banerjee R."/>
            <person name="Chi J."/>
            <person name="Fu B."/>
            <person name="Langley E."/>
            <person name="Maguire S.F."/>
            <person name="Laird G.K."/>
            <person name="Lloyd D."/>
            <person name="Kenyon E."/>
            <person name="Donaldson S."/>
            <person name="Sehra H."/>
            <person name="Almeida-King J."/>
            <person name="Loveland J."/>
            <person name="Trevanion S."/>
            <person name="Jones M."/>
            <person name="Quail M."/>
            <person name="Willey D."/>
            <person name="Hunt A."/>
            <person name="Burton J."/>
            <person name="Sims S."/>
            <person name="McLay K."/>
            <person name="Plumb B."/>
            <person name="Davis J."/>
            <person name="Clee C."/>
            <person name="Oliver K."/>
            <person name="Clark R."/>
            <person name="Riddle C."/>
            <person name="Elliot D."/>
            <person name="Threadgold G."/>
            <person name="Harden G."/>
            <person name="Ware D."/>
            <person name="Begum S."/>
            <person name="Mortimore B."/>
            <person name="Kerry G."/>
            <person name="Heath P."/>
            <person name="Phillimore B."/>
            <person name="Tracey A."/>
            <person name="Corby N."/>
            <person name="Dunn M."/>
            <person name="Johnson C."/>
            <person name="Wood J."/>
            <person name="Clark S."/>
            <person name="Pelan S."/>
            <person name="Griffiths G."/>
            <person name="Smith M."/>
            <person name="Glithero R."/>
            <person name="Howden P."/>
            <person name="Barker N."/>
            <person name="Lloyd C."/>
            <person name="Stevens C."/>
            <person name="Harley J."/>
            <person name="Holt K."/>
            <person name="Panagiotidis G."/>
            <person name="Lovell J."/>
            <person name="Beasley H."/>
            <person name="Henderson C."/>
            <person name="Gordon D."/>
            <person name="Auger K."/>
            <person name="Wright D."/>
            <person name="Collins J."/>
            <person name="Raisen C."/>
            <person name="Dyer L."/>
            <person name="Leung K."/>
            <person name="Robertson L."/>
            <person name="Ambridge K."/>
            <person name="Leongamornlert D."/>
            <person name="McGuire S."/>
            <person name="Gilderthorp R."/>
            <person name="Griffiths C."/>
            <person name="Manthravadi D."/>
            <person name="Nichol S."/>
            <person name="Barker G."/>
            <person name="Whitehead S."/>
            <person name="Kay M."/>
            <person name="Brown J."/>
            <person name="Murnane C."/>
            <person name="Gray E."/>
            <person name="Humphries M."/>
            <person name="Sycamore N."/>
            <person name="Barker D."/>
            <person name="Saunders D."/>
            <person name="Wallis J."/>
            <person name="Babbage A."/>
            <person name="Hammond S."/>
            <person name="Mashreghi-Mohammadi M."/>
            <person name="Barr L."/>
            <person name="Martin S."/>
            <person name="Wray P."/>
            <person name="Ellington A."/>
            <person name="Matthews N."/>
            <person name="Ellwood M."/>
            <person name="Woodmansey R."/>
            <person name="Clark G."/>
            <person name="Cooper J."/>
            <person name="Tromans A."/>
            <person name="Grafham D."/>
            <person name="Skuce C."/>
            <person name="Pandian R."/>
            <person name="Andrews R."/>
            <person name="Harrison E."/>
            <person name="Kimberley A."/>
            <person name="Garnett J."/>
            <person name="Fosker N."/>
            <person name="Hall R."/>
            <person name="Garner P."/>
            <person name="Kelly D."/>
            <person name="Bird C."/>
            <person name="Palmer S."/>
            <person name="Gehring I."/>
            <person name="Berger A."/>
            <person name="Dooley C.M."/>
            <person name="Ersan-Urun Z."/>
            <person name="Eser C."/>
            <person name="Geiger H."/>
            <person name="Geisler M."/>
            <person name="Karotki L."/>
            <person name="Kirn A."/>
            <person name="Konantz J."/>
            <person name="Konantz M."/>
            <person name="Oberlander M."/>
            <person name="Rudolph-Geiger S."/>
            <person name="Teucke M."/>
            <person name="Lanz C."/>
            <person name="Raddatz G."/>
            <person name="Osoegawa K."/>
            <person name="Zhu B."/>
            <person name="Rapp A."/>
            <person name="Widaa S."/>
            <person name="Langford C."/>
            <person name="Yang F."/>
            <person name="Schuster S.C."/>
            <person name="Carter N.P."/>
            <person name="Harrow J."/>
            <person name="Ning Z."/>
            <person name="Herrero J."/>
            <person name="Searle S.M."/>
            <person name="Enright A."/>
            <person name="Geisler R."/>
            <person name="Plasterk R.H."/>
            <person name="Lee C."/>
            <person name="Westerfield M."/>
            <person name="de Jong P.J."/>
            <person name="Zon L.I."/>
            <person name="Postlethwait J.H."/>
            <person name="Nusslein-Volhard C."/>
            <person name="Hubbard T.J."/>
            <person name="Roest Crollius H."/>
            <person name="Rogers J."/>
            <person name="Stemple D.L."/>
        </authorList>
    </citation>
    <scope>NUCLEOTIDE SEQUENCE [LARGE SCALE GENOMIC DNA]</scope>
    <source>
        <strain>Tuebingen</strain>
    </source>
</reference>
<reference key="2">
    <citation type="journal article" date="2010" name="Am. J. Pathol.">
        <title>Tissue distribution and functional analysis of Sushi domain-containing protein 4.</title>
        <authorList>
            <person name="Tu Z."/>
            <person name="Cohen M."/>
            <person name="Bu H."/>
            <person name="Lin F."/>
        </authorList>
    </citation>
    <scope>DISRUPTION PHENOTYPE</scope>
</reference>
<proteinExistence type="inferred from homology"/>
<gene>
    <name type="primary">susd4</name>
</gene>
<keyword id="KW-1015">Disulfide bond</keyword>
<keyword id="KW-0325">Glycoprotein</keyword>
<keyword id="KW-0472">Membrane</keyword>
<keyword id="KW-1185">Reference proteome</keyword>
<keyword id="KW-0677">Repeat</keyword>
<keyword id="KW-0732">Signal</keyword>
<keyword id="KW-0768">Sushi</keyword>
<keyword id="KW-0812">Transmembrane</keyword>
<keyword id="KW-1133">Transmembrane helix</keyword>
<name>SUSD4_DANRE</name>
<dbReference type="EMBL" id="BX088653">
    <property type="status" value="NOT_ANNOTATED_CDS"/>
    <property type="molecule type" value="Genomic_DNA"/>
</dbReference>
<dbReference type="RefSeq" id="NP_001306062.1">
    <property type="nucleotide sequence ID" value="NM_001319133.1"/>
</dbReference>
<dbReference type="SMR" id="E7FEC4"/>
<dbReference type="FunCoup" id="E7FEC4">
    <property type="interactions" value="286"/>
</dbReference>
<dbReference type="STRING" id="7955.ENSDARP00000032279"/>
<dbReference type="GlyCosmos" id="E7FEC4">
    <property type="glycosylation" value="3 sites, No reported glycans"/>
</dbReference>
<dbReference type="PaxDb" id="7955-ENSDARP00000032279"/>
<dbReference type="Ensembl" id="ENSDART00000034432">
    <property type="protein sequence ID" value="ENSDARP00000032279"/>
    <property type="gene ID" value="ENSDARG00000026335"/>
</dbReference>
<dbReference type="GeneID" id="560304"/>
<dbReference type="KEGG" id="dre:560304"/>
<dbReference type="AGR" id="ZFIN:ZDB-GENE-110511-1"/>
<dbReference type="CTD" id="55061"/>
<dbReference type="ZFIN" id="ZDB-GENE-110511-1">
    <property type="gene designation" value="susd4"/>
</dbReference>
<dbReference type="eggNOG" id="ENOG502QU1F">
    <property type="taxonomic scope" value="Eukaryota"/>
</dbReference>
<dbReference type="HOGENOM" id="CLU_044351_1_0_1"/>
<dbReference type="InParanoid" id="E7FEC4"/>
<dbReference type="OMA" id="MIEHGDY"/>
<dbReference type="OrthoDB" id="7487745at2759"/>
<dbReference type="PhylomeDB" id="E7FEC4"/>
<dbReference type="TreeFam" id="TF332459"/>
<dbReference type="PRO" id="PR:E7FEC4"/>
<dbReference type="Proteomes" id="UP000000437">
    <property type="component" value="Chromosome 17"/>
</dbReference>
<dbReference type="Bgee" id="ENSDARG00000026335">
    <property type="expression patterns" value="Expressed in intestine and 14 other cell types or tissues"/>
</dbReference>
<dbReference type="ExpressionAtlas" id="E7FEC4">
    <property type="expression patterns" value="baseline"/>
</dbReference>
<dbReference type="GO" id="GO:0016020">
    <property type="term" value="C:membrane"/>
    <property type="evidence" value="ECO:0007669"/>
    <property type="project" value="UniProtKB-SubCell"/>
</dbReference>
<dbReference type="GO" id="GO:0043009">
    <property type="term" value="P:chordate embryonic development"/>
    <property type="evidence" value="ECO:0000315"/>
    <property type="project" value="ZFIN"/>
</dbReference>
<dbReference type="GO" id="GO:0030449">
    <property type="term" value="P:regulation of complement activation"/>
    <property type="evidence" value="ECO:0007669"/>
    <property type="project" value="InterPro"/>
</dbReference>
<dbReference type="CDD" id="cd00033">
    <property type="entry name" value="CCP"/>
    <property type="match status" value="4"/>
</dbReference>
<dbReference type="FunFam" id="2.10.70.10:FF:000121">
    <property type="entry name" value="Sushi domain-containing protein 4"/>
    <property type="match status" value="1"/>
</dbReference>
<dbReference type="Gene3D" id="2.10.70.10">
    <property type="entry name" value="Complement Module, domain 1"/>
    <property type="match status" value="4"/>
</dbReference>
<dbReference type="InterPro" id="IPR042985">
    <property type="entry name" value="SUSD4"/>
</dbReference>
<dbReference type="InterPro" id="IPR035976">
    <property type="entry name" value="Sushi/SCR/CCP_sf"/>
</dbReference>
<dbReference type="InterPro" id="IPR000436">
    <property type="entry name" value="Sushi_SCR_CCP_dom"/>
</dbReference>
<dbReference type="PANTHER" id="PTHR47007">
    <property type="entry name" value="SUSHI DOMAIN-CONTAINING PROTEIN 4"/>
    <property type="match status" value="1"/>
</dbReference>
<dbReference type="PANTHER" id="PTHR47007:SF1">
    <property type="entry name" value="SUSHI DOMAIN-CONTAINING PROTEIN 4"/>
    <property type="match status" value="1"/>
</dbReference>
<dbReference type="Pfam" id="PF00084">
    <property type="entry name" value="Sushi"/>
    <property type="match status" value="4"/>
</dbReference>
<dbReference type="SMART" id="SM00032">
    <property type="entry name" value="CCP"/>
    <property type="match status" value="4"/>
</dbReference>
<dbReference type="SUPFAM" id="SSF57535">
    <property type="entry name" value="Complement control module/SCR domain"/>
    <property type="match status" value="4"/>
</dbReference>
<dbReference type="PROSITE" id="PS50923">
    <property type="entry name" value="SUSHI"/>
    <property type="match status" value="4"/>
</dbReference>